<feature type="chain" id="PRO_0000161198" description="Elongation factor Ts">
    <location>
        <begin position="1"/>
        <end position="293"/>
    </location>
</feature>
<feature type="region of interest" description="Involved in Mg(2+) ion dislocation from EF-Tu" evidence="1">
    <location>
        <begin position="80"/>
        <end position="83"/>
    </location>
</feature>
<keyword id="KW-0963">Cytoplasm</keyword>
<keyword id="KW-0251">Elongation factor</keyword>
<keyword id="KW-0648">Protein biosynthesis</keyword>
<organism>
    <name type="scientific">Staphylococcus aureus (strain MRSA252)</name>
    <dbReference type="NCBI Taxonomy" id="282458"/>
    <lineage>
        <taxon>Bacteria</taxon>
        <taxon>Bacillati</taxon>
        <taxon>Bacillota</taxon>
        <taxon>Bacilli</taxon>
        <taxon>Bacillales</taxon>
        <taxon>Staphylococcaceae</taxon>
        <taxon>Staphylococcus</taxon>
    </lineage>
</organism>
<proteinExistence type="inferred from homology"/>
<comment type="function">
    <text evidence="1">Associates with the EF-Tu.GDP complex and induces the exchange of GDP to GTP. It remains bound to the aminoacyl-tRNA.EF-Tu.GTP complex up to the GTP hydrolysis stage on the ribosome.</text>
</comment>
<comment type="subcellular location">
    <subcellularLocation>
        <location evidence="1">Cytoplasm</location>
    </subcellularLocation>
</comment>
<comment type="similarity">
    <text evidence="1">Belongs to the EF-Ts family.</text>
</comment>
<sequence>MATISAKLVKELREKTGAGMMDCKKALTETDGDIDKAIDYLREKGIAKAAKKADRIAAEGLVHVETKGNDAVIVEINSETDFVARNEGFQELVKEIANQVLDTKAETVEALMETTLPNGKSVDERIKEAISTIGEKLSVRRFAIRTKTDNDAFGAYLHMGGRIGVLTVVEGSTDEEAARDVAMHIAAINPKYVSSEQVSEEEINHEREVLKQQALNEGKPENIVEKMVEGRLRKYLQEICAVDQDFVKNPDVTVEAFLKTKGGKLVDFVRYEVGEGMEKREENFADEVKGQMK</sequence>
<dbReference type="EMBL" id="BX571856">
    <property type="protein sequence ID" value="CAG40235.1"/>
    <property type="molecule type" value="Genomic_DNA"/>
</dbReference>
<dbReference type="RefSeq" id="WP_000201387.1">
    <property type="nucleotide sequence ID" value="NC_002952.2"/>
</dbReference>
<dbReference type="SMR" id="Q6GHH8"/>
<dbReference type="KEGG" id="sar:SAR1233"/>
<dbReference type="HOGENOM" id="CLU_047155_0_2_9"/>
<dbReference type="Proteomes" id="UP000000596">
    <property type="component" value="Chromosome"/>
</dbReference>
<dbReference type="GO" id="GO:0005737">
    <property type="term" value="C:cytoplasm"/>
    <property type="evidence" value="ECO:0007669"/>
    <property type="project" value="UniProtKB-SubCell"/>
</dbReference>
<dbReference type="GO" id="GO:0003746">
    <property type="term" value="F:translation elongation factor activity"/>
    <property type="evidence" value="ECO:0007669"/>
    <property type="project" value="UniProtKB-UniRule"/>
</dbReference>
<dbReference type="CDD" id="cd14275">
    <property type="entry name" value="UBA_EF-Ts"/>
    <property type="match status" value="1"/>
</dbReference>
<dbReference type="FunFam" id="1.10.286.20:FF:000003">
    <property type="entry name" value="Elongation factor Ts"/>
    <property type="match status" value="1"/>
</dbReference>
<dbReference type="FunFam" id="1.10.8.10:FF:000001">
    <property type="entry name" value="Elongation factor Ts"/>
    <property type="match status" value="1"/>
</dbReference>
<dbReference type="FunFam" id="3.30.479.20:FF:000005">
    <property type="entry name" value="Elongation factor Ts"/>
    <property type="match status" value="1"/>
</dbReference>
<dbReference type="Gene3D" id="1.10.286.20">
    <property type="match status" value="1"/>
</dbReference>
<dbReference type="Gene3D" id="1.10.8.10">
    <property type="entry name" value="DNA helicase RuvA subunit, C-terminal domain"/>
    <property type="match status" value="1"/>
</dbReference>
<dbReference type="Gene3D" id="3.30.479.20">
    <property type="entry name" value="Elongation factor Ts, dimerisation domain"/>
    <property type="match status" value="2"/>
</dbReference>
<dbReference type="HAMAP" id="MF_00050">
    <property type="entry name" value="EF_Ts"/>
    <property type="match status" value="1"/>
</dbReference>
<dbReference type="InterPro" id="IPR036402">
    <property type="entry name" value="EF-Ts_dimer_sf"/>
</dbReference>
<dbReference type="InterPro" id="IPR001816">
    <property type="entry name" value="Transl_elong_EFTs/EF1B"/>
</dbReference>
<dbReference type="InterPro" id="IPR014039">
    <property type="entry name" value="Transl_elong_EFTs/EF1B_dimer"/>
</dbReference>
<dbReference type="InterPro" id="IPR018101">
    <property type="entry name" value="Transl_elong_Ts_CS"/>
</dbReference>
<dbReference type="InterPro" id="IPR009060">
    <property type="entry name" value="UBA-like_sf"/>
</dbReference>
<dbReference type="NCBIfam" id="TIGR00116">
    <property type="entry name" value="tsf"/>
    <property type="match status" value="1"/>
</dbReference>
<dbReference type="PANTHER" id="PTHR11741">
    <property type="entry name" value="ELONGATION FACTOR TS"/>
    <property type="match status" value="1"/>
</dbReference>
<dbReference type="PANTHER" id="PTHR11741:SF0">
    <property type="entry name" value="ELONGATION FACTOR TS, MITOCHONDRIAL"/>
    <property type="match status" value="1"/>
</dbReference>
<dbReference type="Pfam" id="PF00889">
    <property type="entry name" value="EF_TS"/>
    <property type="match status" value="1"/>
</dbReference>
<dbReference type="SUPFAM" id="SSF54713">
    <property type="entry name" value="Elongation factor Ts (EF-Ts), dimerisation domain"/>
    <property type="match status" value="2"/>
</dbReference>
<dbReference type="SUPFAM" id="SSF46934">
    <property type="entry name" value="UBA-like"/>
    <property type="match status" value="1"/>
</dbReference>
<dbReference type="PROSITE" id="PS01126">
    <property type="entry name" value="EF_TS_1"/>
    <property type="match status" value="1"/>
</dbReference>
<dbReference type="PROSITE" id="PS01127">
    <property type="entry name" value="EF_TS_2"/>
    <property type="match status" value="1"/>
</dbReference>
<accession>Q6GHH8</accession>
<evidence type="ECO:0000255" key="1">
    <source>
        <dbReference type="HAMAP-Rule" id="MF_00050"/>
    </source>
</evidence>
<gene>
    <name evidence="1" type="primary">tsf</name>
    <name type="ordered locus">SAR1233</name>
</gene>
<name>EFTS_STAAR</name>
<reference key="1">
    <citation type="journal article" date="2004" name="Proc. Natl. Acad. Sci. U.S.A.">
        <title>Complete genomes of two clinical Staphylococcus aureus strains: evidence for the rapid evolution of virulence and drug resistance.</title>
        <authorList>
            <person name="Holden M.T.G."/>
            <person name="Feil E.J."/>
            <person name="Lindsay J.A."/>
            <person name="Peacock S.J."/>
            <person name="Day N.P.J."/>
            <person name="Enright M.C."/>
            <person name="Foster T.J."/>
            <person name="Moore C.E."/>
            <person name="Hurst L."/>
            <person name="Atkin R."/>
            <person name="Barron A."/>
            <person name="Bason N."/>
            <person name="Bentley S.D."/>
            <person name="Chillingworth C."/>
            <person name="Chillingworth T."/>
            <person name="Churcher C."/>
            <person name="Clark L."/>
            <person name="Corton C."/>
            <person name="Cronin A."/>
            <person name="Doggett J."/>
            <person name="Dowd L."/>
            <person name="Feltwell T."/>
            <person name="Hance Z."/>
            <person name="Harris B."/>
            <person name="Hauser H."/>
            <person name="Holroyd S."/>
            <person name="Jagels K."/>
            <person name="James K.D."/>
            <person name="Lennard N."/>
            <person name="Line A."/>
            <person name="Mayes R."/>
            <person name="Moule S."/>
            <person name="Mungall K."/>
            <person name="Ormond D."/>
            <person name="Quail M.A."/>
            <person name="Rabbinowitsch E."/>
            <person name="Rutherford K.M."/>
            <person name="Sanders M."/>
            <person name="Sharp S."/>
            <person name="Simmonds M."/>
            <person name="Stevens K."/>
            <person name="Whitehead S."/>
            <person name="Barrell B.G."/>
            <person name="Spratt B.G."/>
            <person name="Parkhill J."/>
        </authorList>
    </citation>
    <scope>NUCLEOTIDE SEQUENCE [LARGE SCALE GENOMIC DNA]</scope>
    <source>
        <strain>MRSA252</strain>
    </source>
</reference>
<protein>
    <recommendedName>
        <fullName evidence="1">Elongation factor Ts</fullName>
        <shortName evidence="1">EF-Ts</shortName>
    </recommendedName>
</protein>